<keyword id="KW-0067">ATP-binding</keyword>
<keyword id="KW-0119">Carbohydrate metabolism</keyword>
<keyword id="KW-0320">Glycogen biosynthesis</keyword>
<keyword id="KW-0321">Glycogen metabolism</keyword>
<keyword id="KW-0418">Kinase</keyword>
<keyword id="KW-0547">Nucleotide-binding</keyword>
<keyword id="KW-0808">Transferase</keyword>
<protein>
    <recommendedName>
        <fullName>Maltokinase</fullName>
        <shortName>MaK</shortName>
        <ecNumber>2.7.1.175</ecNumber>
    </recommendedName>
    <alternativeName>
        <fullName>Maltose-1-phosphate synthase</fullName>
    </alternativeName>
</protein>
<proteinExistence type="inferred from homology"/>
<gene>
    <name type="primary">mak</name>
    <name type="ordered locus">TBFG_10128</name>
</gene>
<name>MAK_MYCTF</name>
<feature type="chain" id="PRO_0000412897" description="Maltokinase">
    <location>
        <begin position="1"/>
        <end position="455"/>
    </location>
</feature>
<comment type="function">
    <text evidence="1">Catalyzes the ATP-dependent phosphorylation of maltose to maltose 1-phosphate. Is involved in a branched alpha-glucan biosynthetic pathway from trehalose, together with TreS, GlgE and GlgB (By similarity).</text>
</comment>
<comment type="catalytic activity">
    <reaction>
        <text>D-maltose + ATP = alpha-maltose 1-phosphate + ADP + H(+)</text>
        <dbReference type="Rhea" id="RHEA:31915"/>
        <dbReference type="ChEBI" id="CHEBI:15378"/>
        <dbReference type="ChEBI" id="CHEBI:17306"/>
        <dbReference type="ChEBI" id="CHEBI:30616"/>
        <dbReference type="ChEBI" id="CHEBI:63576"/>
        <dbReference type="ChEBI" id="CHEBI:456216"/>
        <dbReference type="EC" id="2.7.1.175"/>
    </reaction>
</comment>
<comment type="pathway">
    <text>Glycan biosynthesis; glycogen biosynthesis.</text>
</comment>
<comment type="subunit">
    <text evidence="1">Monomer.</text>
</comment>
<comment type="similarity">
    <text evidence="2">Belongs to the aminoglycoside phosphotransferase family.</text>
</comment>
<evidence type="ECO:0000250" key="1"/>
<evidence type="ECO:0000305" key="2"/>
<reference key="1">
    <citation type="submission" date="2007-04" db="EMBL/GenBank/DDBJ databases">
        <title>The complete genome sequence of Mycobacterium tuberculosis F11.</title>
        <authorList>
            <person name="Birren B."/>
            <person name="Lander E."/>
            <person name="Galagan J."/>
            <person name="Devon K."/>
            <person name="Nusbaum C."/>
            <person name="Borowsky M.L."/>
            <person name="Grabherr M."/>
            <person name="Mauceli E."/>
            <person name="Brockman W."/>
            <person name="Young S."/>
            <person name="LaButti K."/>
            <person name="Pushparaj V."/>
            <person name="Sykes S."/>
            <person name="Baldwin J."/>
            <person name="Fitzgerald M."/>
            <person name="Bloom T."/>
            <person name="Zimmer A."/>
            <person name="Settipalli S."/>
            <person name="Shea T."/>
            <person name="Arachchi H."/>
            <person name="Macdonald P."/>
            <person name="Abouelleil A."/>
            <person name="Lui A."/>
            <person name="Priest M."/>
            <person name="Berlin A."/>
            <person name="Gearin G."/>
            <person name="Brown A."/>
            <person name="Aftuck L."/>
            <person name="Bessette D."/>
            <person name="Allen N."/>
            <person name="Lubonja R."/>
            <person name="Lokyitsang T."/>
            <person name="Matthews C."/>
            <person name="Dunbar C."/>
            <person name="Benamara M."/>
            <person name="Nguyen T."/>
            <person name="Negash T."/>
            <person name="DeCaprio D."/>
            <person name="Crawford M."/>
            <person name="Koehrsen M."/>
            <person name="Engels R."/>
            <person name="Montgomery P."/>
            <person name="Pearson M."/>
            <person name="Howarth C."/>
            <person name="Kodira C."/>
            <person name="Zeng Q."/>
            <person name="Yandava C."/>
            <person name="O'Leary S."/>
            <person name="Alvarado L."/>
            <person name="Victor T."/>
            <person name="Murray M."/>
        </authorList>
    </citation>
    <scope>NUCLEOTIDE SEQUENCE [LARGE SCALE GENOMIC DNA]</scope>
    <source>
        <strain>F11</strain>
    </source>
</reference>
<dbReference type="EC" id="2.7.1.175"/>
<dbReference type="EMBL" id="CP000717">
    <property type="protein sequence ID" value="ABR04471.1"/>
    <property type="molecule type" value="Genomic_DNA"/>
</dbReference>
<dbReference type="RefSeq" id="WP_003899824.1">
    <property type="nucleotide sequence ID" value="NZ_KK339377.1"/>
</dbReference>
<dbReference type="SMR" id="A5WII2"/>
<dbReference type="KEGG" id="mtf:TBFG_10128"/>
<dbReference type="PATRIC" id="fig|336982.11.peg.146"/>
<dbReference type="HOGENOM" id="CLU_029675_0_0_11"/>
<dbReference type="UniPathway" id="UPA00164"/>
<dbReference type="GO" id="GO:0005524">
    <property type="term" value="F:ATP binding"/>
    <property type="evidence" value="ECO:0007669"/>
    <property type="project" value="UniProtKB-KW"/>
</dbReference>
<dbReference type="GO" id="GO:0016301">
    <property type="term" value="F:kinase activity"/>
    <property type="evidence" value="ECO:0007669"/>
    <property type="project" value="UniProtKB-KW"/>
</dbReference>
<dbReference type="GO" id="GO:0046835">
    <property type="term" value="P:carbohydrate phosphorylation"/>
    <property type="evidence" value="ECO:0000250"/>
    <property type="project" value="UniProtKB"/>
</dbReference>
<dbReference type="GO" id="GO:0005978">
    <property type="term" value="P:glycogen biosynthetic process"/>
    <property type="evidence" value="ECO:0007669"/>
    <property type="project" value="UniProtKB-UniPathway"/>
</dbReference>
<dbReference type="GO" id="GO:0005992">
    <property type="term" value="P:trehalose biosynthetic process"/>
    <property type="evidence" value="ECO:0000250"/>
    <property type="project" value="UniProtKB"/>
</dbReference>
<dbReference type="FunFam" id="3.90.1200.10:FF:000010">
    <property type="entry name" value="Maltokinase"/>
    <property type="match status" value="1"/>
</dbReference>
<dbReference type="Gene3D" id="3.90.1200.10">
    <property type="match status" value="1"/>
</dbReference>
<dbReference type="InterPro" id="IPR011009">
    <property type="entry name" value="Kinase-like_dom_sf"/>
</dbReference>
<dbReference type="InterPro" id="IPR040999">
    <property type="entry name" value="Mak_N_cap"/>
</dbReference>
<dbReference type="Pfam" id="PF18085">
    <property type="entry name" value="Mak_N_cap"/>
    <property type="match status" value="1"/>
</dbReference>
<dbReference type="SUPFAM" id="SSF56112">
    <property type="entry name" value="Protein kinase-like (PK-like)"/>
    <property type="match status" value="1"/>
</dbReference>
<organism>
    <name type="scientific">Mycobacterium tuberculosis (strain F11)</name>
    <dbReference type="NCBI Taxonomy" id="336982"/>
    <lineage>
        <taxon>Bacteria</taxon>
        <taxon>Bacillati</taxon>
        <taxon>Actinomycetota</taxon>
        <taxon>Actinomycetes</taxon>
        <taxon>Mycobacteriales</taxon>
        <taxon>Mycobacteriaceae</taxon>
        <taxon>Mycobacterium</taxon>
        <taxon>Mycobacterium tuberculosis complex</taxon>
    </lineage>
</organism>
<sequence length="455" mass="49889">MTRSDTLATKLPWSDWLPRQRWYAGRNRELATVKPGVVVALRHNLDLVLVDVTYTDGATERYQVLVGWDFEPASEYGTKAAIGVADDRTGFDALYDVAGPQFLLSLIVSSAVCGTSTGEVTFTREPDVELPFAAQPRVCDAEQSNTSVIFDRRAILKVFRRVSSGINPDIELNRVLTRAGNPHVARLLGAYQFGRPNRSPTDALAYALGMVTEYEANAAEGWAMATASVRDLFAEGDLYAHEVGGDFAGESYRLGEAVASVHATLADSLGTAQATFPVDRMLARLSSTVAVVPELREYAPTIEQQFQKLAAEAITVQRVHGDLHLGQVLRTPESWLLIDFEGEPGQPLDERRAPDSPLRDVAGVLRSFEYAAYGPLVDQATDKQLAARAREWVERNRAAFCDGYAVASGIDPRDSALLLGAYELDKAVYETGYETRHRPGWLPIPLRSIARLTAS</sequence>
<accession>A5WII2</accession>